<proteinExistence type="evidence at transcript level"/>
<evidence type="ECO:0000250" key="1"/>
<evidence type="ECO:0000256" key="2">
    <source>
        <dbReference type="SAM" id="MobiDB-lite"/>
    </source>
</evidence>
<evidence type="ECO:0000305" key="3"/>
<feature type="chain" id="PRO_0000210346" description="Glucans biosynthesis protein G">
    <location>
        <begin position="1" status="less than"/>
        <end position="384"/>
    </location>
</feature>
<feature type="region of interest" description="Disordered" evidence="2">
    <location>
        <begin position="276"/>
        <end position="384"/>
    </location>
</feature>
<feature type="compositionally biased region" description="Basic and acidic residues" evidence="2">
    <location>
        <begin position="294"/>
        <end position="352"/>
    </location>
</feature>
<feature type="compositionally biased region" description="Polar residues" evidence="2">
    <location>
        <begin position="370"/>
        <end position="384"/>
    </location>
</feature>
<feature type="non-terminal residue">
    <location>
        <position position="1"/>
    </location>
</feature>
<accession>P20400</accession>
<reference key="1">
    <citation type="journal article" date="1988" name="J. Bacteriol.">
        <title>Molecular analysis of a pathogenicity locus in Pseudomonas syringae pv. syringae.</title>
        <authorList>
            <person name="Mukhopadhyay P."/>
            <person name="Williams J."/>
            <person name="Mills D."/>
        </authorList>
    </citation>
    <scope>NUCLEOTIDE SEQUENCE [MRNA]</scope>
    <source>
        <strain>R32</strain>
    </source>
</reference>
<name>OPGG_PSESY</name>
<dbReference type="EMBL" id="M23555">
    <property type="status" value="NOT_ANNOTATED_CDS"/>
    <property type="molecule type" value="mRNA"/>
</dbReference>
<dbReference type="PIR" id="A31383">
    <property type="entry name" value="A31383"/>
</dbReference>
<dbReference type="SMR" id="P20400"/>
<dbReference type="UniPathway" id="UPA00637"/>
<dbReference type="GO" id="GO:0030288">
    <property type="term" value="C:outer membrane-bounded periplasmic space"/>
    <property type="evidence" value="ECO:0007669"/>
    <property type="project" value="TreeGrafter"/>
</dbReference>
<dbReference type="GO" id="GO:0030246">
    <property type="term" value="F:carbohydrate binding"/>
    <property type="evidence" value="ECO:0007669"/>
    <property type="project" value="InterPro"/>
</dbReference>
<dbReference type="GO" id="GO:0003824">
    <property type="term" value="F:catalytic activity"/>
    <property type="evidence" value="ECO:0007669"/>
    <property type="project" value="InterPro"/>
</dbReference>
<dbReference type="GO" id="GO:0051274">
    <property type="term" value="P:beta-glucan biosynthetic process"/>
    <property type="evidence" value="ECO:0007669"/>
    <property type="project" value="TreeGrafter"/>
</dbReference>
<dbReference type="Gene3D" id="2.70.98.10">
    <property type="match status" value="1"/>
</dbReference>
<dbReference type="Gene3D" id="2.60.40.10">
    <property type="entry name" value="Immunoglobulins"/>
    <property type="match status" value="1"/>
</dbReference>
<dbReference type="InterPro" id="IPR011013">
    <property type="entry name" value="Gal_mutarotase_sf_dom"/>
</dbReference>
<dbReference type="InterPro" id="IPR014718">
    <property type="entry name" value="GH-type_carb-bd"/>
</dbReference>
<dbReference type="InterPro" id="IPR014438">
    <property type="entry name" value="Glucan_biosyn_MdoG/MdoD"/>
</dbReference>
<dbReference type="InterPro" id="IPR007444">
    <property type="entry name" value="Glucan_biosyn_MdoG_C"/>
</dbReference>
<dbReference type="InterPro" id="IPR013783">
    <property type="entry name" value="Ig-like_fold"/>
</dbReference>
<dbReference type="InterPro" id="IPR014756">
    <property type="entry name" value="Ig_E-set"/>
</dbReference>
<dbReference type="PANTHER" id="PTHR30504">
    <property type="entry name" value="GLUCANS BIOSYNTHESIS PROTEIN"/>
    <property type="match status" value="1"/>
</dbReference>
<dbReference type="PANTHER" id="PTHR30504:SF4">
    <property type="entry name" value="GLUCANS BIOSYNTHESIS PROTEIN G"/>
    <property type="match status" value="1"/>
</dbReference>
<dbReference type="Pfam" id="PF04349">
    <property type="entry name" value="MdoG"/>
    <property type="match status" value="1"/>
</dbReference>
<dbReference type="SUPFAM" id="SSF81296">
    <property type="entry name" value="E set domains"/>
    <property type="match status" value="1"/>
</dbReference>
<dbReference type="SUPFAM" id="SSF74650">
    <property type="entry name" value="Galactose mutarotase-like"/>
    <property type="match status" value="1"/>
</dbReference>
<sequence length="384" mass="42382">KLGVAPLTSMFLFGANQPSRVPNYRRELHDSSGLSIQAANGEWLWRPLNNPKHLSISSFSVENPRGFGLLQRGRDFSQYEDLDDRYDKRPSAWIEPKGDWGKGTVELVEIPTADETNDNIVAYWKPETLAEPGQEMAFDYRLHWTMQENSIHSPDLGWVKQTQRSIGDVRQSNLIRQPDGSLAFLVDFVGPVLAALPEDKTIRSQVTTDDNVELVENNLRYNPVTKGYRLTLRVKVKDSSKPTEMRAYLLREIPAEPGKEPALLVADKAEEKKAAAKEAAKPAVSKESANDQVEIAKADAPKPEAAKPETAKSEAGKADAAKGKGEVAKADAGKADASKAEAAKDKDGKEIQQPETEAAPTHPEPAKTLQVMTETWSYQLPSDE</sequence>
<comment type="function">
    <text evidence="1">Involved in the biosynthesis of osmoregulated periplasmic glucans (OPGs).</text>
</comment>
<comment type="pathway">
    <text>Glycan metabolism; osmoregulated periplasmic glucan (OPG) biosynthesis.</text>
</comment>
<comment type="subcellular location">
    <subcellularLocation>
        <location evidence="1">Periplasm</location>
    </subcellularLocation>
</comment>
<comment type="similarity">
    <text evidence="3">Belongs to the OpgD/OpgG family.</text>
</comment>
<organism>
    <name type="scientific">Pseudomonas syringae pv. syringae</name>
    <dbReference type="NCBI Taxonomy" id="321"/>
    <lineage>
        <taxon>Bacteria</taxon>
        <taxon>Pseudomonadati</taxon>
        <taxon>Pseudomonadota</taxon>
        <taxon>Gammaproteobacteria</taxon>
        <taxon>Pseudomonadales</taxon>
        <taxon>Pseudomonadaceae</taxon>
        <taxon>Pseudomonas</taxon>
        <taxon>Pseudomonas syringae</taxon>
    </lineage>
</organism>
<keyword id="KW-0574">Periplasm</keyword>
<protein>
    <recommendedName>
        <fullName>Glucans biosynthesis protein G</fullName>
    </recommendedName>
</protein>
<gene>
    <name type="primary">opgG</name>
</gene>